<protein>
    <recommendedName>
        <fullName>Plasma membrane fusion protein prm1</fullName>
    </recommendedName>
</protein>
<organism>
    <name type="scientific">Aspergillus oryzae (strain ATCC 42149 / RIB 40)</name>
    <name type="common">Yellow koji mold</name>
    <dbReference type="NCBI Taxonomy" id="510516"/>
    <lineage>
        <taxon>Eukaryota</taxon>
        <taxon>Fungi</taxon>
        <taxon>Dikarya</taxon>
        <taxon>Ascomycota</taxon>
        <taxon>Pezizomycotina</taxon>
        <taxon>Eurotiomycetes</taxon>
        <taxon>Eurotiomycetidae</taxon>
        <taxon>Eurotiales</taxon>
        <taxon>Aspergillaceae</taxon>
        <taxon>Aspergillus</taxon>
        <taxon>Aspergillus subgen. Circumdati</taxon>
    </lineage>
</organism>
<comment type="function">
    <text evidence="1">Involved in cell fusion during mating by stabilizing the plasma membrane fusion event.</text>
</comment>
<comment type="subcellular location">
    <subcellularLocation>
        <location evidence="1">Cell membrane</location>
        <topology evidence="1">Multi-pass membrane protein</topology>
    </subcellularLocation>
</comment>
<comment type="similarity">
    <text evidence="3">Belongs to the PRM1 family.</text>
</comment>
<keyword id="KW-1003">Cell membrane</keyword>
<keyword id="KW-0184">Conjugation</keyword>
<keyword id="KW-0325">Glycoprotein</keyword>
<keyword id="KW-0472">Membrane</keyword>
<keyword id="KW-1185">Reference proteome</keyword>
<keyword id="KW-0812">Transmembrane</keyword>
<keyword id="KW-1133">Transmembrane helix</keyword>
<accession>Q2UJS0</accession>
<sequence>MVFSRSGRSIFPLLPPYGAHDPNGGPGRAVPLHPDGITPYLGLRARLSQVWLNRWTILLLLVLARVLIAATGMQSDMDSAKREAQSACTSVETMGSAMASMPHYLSRGVNELTASGVEAAVNGLISMLLLTITGVEALIIFFIKVMYQTYLCLFTMVVRGSTQAALGVIQDTTEFLNKTVQTVGEDIGKAVETFESGLNKFLSGINKVASAFGGEVPTLNISKNIDELKDIHLPGSINDTIDKINSSIPTFDEVDKFVTDVLKFPFEEVKSLINGSLGNYTFDRSALPVPAKEQLTFCDENNGINTFFRKVAETIVAARKIFLAVLIIAATLVCVPVAWQEIRRWRTMKERSQIVRKDAHDPMDVVYIVSRPHTAGAGIKAASRFSNSRRQILVRWAIAYATSPAALFVLCLALAGLFACLCQYLLLKAIERTVPELTSEVGEFAEKVVTSLQNTSAKWANDTNGVIDGMSNDINKNVLGWVNTSTTAVNDTLNAFVDKTTGVLNDTFGGTILYSPLQDVFNCLIGLKVASVQKGLTWVHDHAHVDFPHVPNDILSKGADSSINNSTSASDSFLANPGDKTSDKITEVVMRVLNKIKEGVRTETIISACVLGIWFINFLFGLIRAMILFWGRDKNRGEGGGAPINNNPDVNGFTEVPLTAIPNTQAASLPAPRYEVALKTPPVVGHFHEDEKMGYAGQRALKVDGTSDLRGSSYIEYGIEKR</sequence>
<gene>
    <name type="primary">prm1</name>
    <name type="ORF">AO090003001100</name>
</gene>
<evidence type="ECO:0000250" key="1"/>
<evidence type="ECO:0000255" key="2"/>
<evidence type="ECO:0000305" key="3"/>
<name>PRM1_ASPOR</name>
<proteinExistence type="inferred from homology"/>
<reference key="1">
    <citation type="journal article" date="2005" name="Nature">
        <title>Genome sequencing and analysis of Aspergillus oryzae.</title>
        <authorList>
            <person name="Machida M."/>
            <person name="Asai K."/>
            <person name="Sano M."/>
            <person name="Tanaka T."/>
            <person name="Kumagai T."/>
            <person name="Terai G."/>
            <person name="Kusumoto K."/>
            <person name="Arima T."/>
            <person name="Akita O."/>
            <person name="Kashiwagi Y."/>
            <person name="Abe K."/>
            <person name="Gomi K."/>
            <person name="Horiuchi H."/>
            <person name="Kitamoto K."/>
            <person name="Kobayashi T."/>
            <person name="Takeuchi M."/>
            <person name="Denning D.W."/>
            <person name="Galagan J.E."/>
            <person name="Nierman W.C."/>
            <person name="Yu J."/>
            <person name="Archer D.B."/>
            <person name="Bennett J.W."/>
            <person name="Bhatnagar D."/>
            <person name="Cleveland T.E."/>
            <person name="Fedorova N.D."/>
            <person name="Gotoh O."/>
            <person name="Horikawa H."/>
            <person name="Hosoyama A."/>
            <person name="Ichinomiya M."/>
            <person name="Igarashi R."/>
            <person name="Iwashita K."/>
            <person name="Juvvadi P.R."/>
            <person name="Kato M."/>
            <person name="Kato Y."/>
            <person name="Kin T."/>
            <person name="Kokubun A."/>
            <person name="Maeda H."/>
            <person name="Maeyama N."/>
            <person name="Maruyama J."/>
            <person name="Nagasaki H."/>
            <person name="Nakajima T."/>
            <person name="Oda K."/>
            <person name="Okada K."/>
            <person name="Paulsen I."/>
            <person name="Sakamoto K."/>
            <person name="Sawano T."/>
            <person name="Takahashi M."/>
            <person name="Takase K."/>
            <person name="Terabayashi Y."/>
            <person name="Wortman J.R."/>
            <person name="Yamada O."/>
            <person name="Yamagata Y."/>
            <person name="Anazawa H."/>
            <person name="Hata Y."/>
            <person name="Koide Y."/>
            <person name="Komori T."/>
            <person name="Koyama Y."/>
            <person name="Minetoki T."/>
            <person name="Suharnan S."/>
            <person name="Tanaka A."/>
            <person name="Isono K."/>
            <person name="Kuhara S."/>
            <person name="Ogasawara N."/>
            <person name="Kikuchi H."/>
        </authorList>
    </citation>
    <scope>NUCLEOTIDE SEQUENCE [LARGE SCALE GENOMIC DNA]</scope>
    <source>
        <strain>ATCC 42149 / RIB 40</strain>
    </source>
</reference>
<dbReference type="EMBL" id="BA000050">
    <property type="protein sequence ID" value="BAE58195.1"/>
    <property type="molecule type" value="Genomic_DNA"/>
</dbReference>
<dbReference type="RefSeq" id="XP_001820197.1">
    <property type="nucleotide sequence ID" value="XM_001820145.1"/>
</dbReference>
<dbReference type="STRING" id="510516.Q2UJS0"/>
<dbReference type="GlyCosmos" id="Q2UJS0">
    <property type="glycosylation" value="13 sites, No reported glycans"/>
</dbReference>
<dbReference type="EnsemblFungi" id="BAE58195">
    <property type="protein sequence ID" value="BAE58195"/>
    <property type="gene ID" value="AO090003001100"/>
</dbReference>
<dbReference type="GeneID" id="5992180"/>
<dbReference type="KEGG" id="aor:AO090003001100"/>
<dbReference type="VEuPathDB" id="FungiDB:AO090003001100"/>
<dbReference type="HOGENOM" id="CLU_010191_1_0_1"/>
<dbReference type="OMA" id="NVFGWVN"/>
<dbReference type="OrthoDB" id="74071at5052"/>
<dbReference type="Proteomes" id="UP000006564">
    <property type="component" value="Chromosome 2"/>
</dbReference>
<dbReference type="GO" id="GO:0043332">
    <property type="term" value="C:mating projection tip"/>
    <property type="evidence" value="ECO:0007669"/>
    <property type="project" value="InterPro"/>
</dbReference>
<dbReference type="GO" id="GO:0005886">
    <property type="term" value="C:plasma membrane"/>
    <property type="evidence" value="ECO:0007669"/>
    <property type="project" value="UniProtKB-SubCell"/>
</dbReference>
<dbReference type="GO" id="GO:0032220">
    <property type="term" value="P:plasma membrane fusion involved in cytogamy"/>
    <property type="evidence" value="ECO:0007669"/>
    <property type="project" value="TreeGrafter"/>
</dbReference>
<dbReference type="InterPro" id="IPR026777">
    <property type="entry name" value="PRM1"/>
</dbReference>
<dbReference type="PANTHER" id="PTHR31030">
    <property type="entry name" value="PLASMA MEMBRANE FUSION PROTEIN PRM1"/>
    <property type="match status" value="1"/>
</dbReference>
<dbReference type="PANTHER" id="PTHR31030:SF1">
    <property type="entry name" value="PLASMA MEMBRANE FUSION PROTEIN PRM1"/>
    <property type="match status" value="1"/>
</dbReference>
<feature type="chain" id="PRO_0000337271" description="Plasma membrane fusion protein prm1">
    <location>
        <begin position="1"/>
        <end position="722"/>
    </location>
</feature>
<feature type="topological domain" description="Extracellular" evidence="1">
    <location>
        <begin position="1"/>
        <end position="54"/>
    </location>
</feature>
<feature type="transmembrane region" description="Helical" evidence="2">
    <location>
        <begin position="55"/>
        <end position="75"/>
    </location>
</feature>
<feature type="topological domain" description="Cytoplasmic" evidence="1">
    <location>
        <begin position="76"/>
        <end position="122"/>
    </location>
</feature>
<feature type="transmembrane region" description="Helical" evidence="2">
    <location>
        <begin position="123"/>
        <end position="143"/>
    </location>
</feature>
<feature type="topological domain" description="Extracellular" evidence="1">
    <location>
        <begin position="144"/>
        <end position="320"/>
    </location>
</feature>
<feature type="transmembrane region" description="Helical" evidence="2">
    <location>
        <begin position="321"/>
        <end position="341"/>
    </location>
</feature>
<feature type="topological domain" description="Cytoplasmic" evidence="1">
    <location>
        <begin position="342"/>
        <end position="406"/>
    </location>
</feature>
<feature type="transmembrane region" description="Helical" evidence="2">
    <location>
        <begin position="407"/>
        <end position="427"/>
    </location>
</feature>
<feature type="topological domain" description="Extracellular" evidence="1">
    <location>
        <begin position="428"/>
        <end position="609"/>
    </location>
</feature>
<feature type="transmembrane region" description="Helical" evidence="2">
    <location>
        <begin position="610"/>
        <end position="630"/>
    </location>
</feature>
<feature type="topological domain" description="Cytoplasmic" evidence="1">
    <location>
        <begin position="631"/>
        <end position="722"/>
    </location>
</feature>
<feature type="glycosylation site" description="N-linked (GlcNAc...) asparagine" evidence="2">
    <location>
        <position position="177"/>
    </location>
</feature>
<feature type="glycosylation site" description="N-linked (GlcNAc...) asparagine" evidence="2">
    <location>
        <position position="220"/>
    </location>
</feature>
<feature type="glycosylation site" description="N-linked (GlcNAc...) asparagine" evidence="2">
    <location>
        <position position="238"/>
    </location>
</feature>
<feature type="glycosylation site" description="N-linked (GlcNAc...) asparagine" evidence="2">
    <location>
        <position position="245"/>
    </location>
</feature>
<feature type="glycosylation site" description="N-linked (GlcNAc...) asparagine" evidence="2">
    <location>
        <position position="274"/>
    </location>
</feature>
<feature type="glycosylation site" description="N-linked (GlcNAc...) asparagine" evidence="2">
    <location>
        <position position="279"/>
    </location>
</feature>
<feature type="glycosylation site" description="N-linked (GlcNAc...) asparagine" evidence="2">
    <location>
        <position position="454"/>
    </location>
</feature>
<feature type="glycosylation site" description="N-linked (GlcNAc...) asparagine" evidence="2">
    <location>
        <position position="461"/>
    </location>
</feature>
<feature type="glycosylation site" description="N-linked (GlcNAc...) asparagine" evidence="2">
    <location>
        <position position="483"/>
    </location>
</feature>
<feature type="glycosylation site" description="N-linked (GlcNAc...) asparagine" evidence="2">
    <location>
        <position position="490"/>
    </location>
</feature>
<feature type="glycosylation site" description="N-linked (GlcNAc...) asparagine" evidence="2">
    <location>
        <position position="505"/>
    </location>
</feature>
<feature type="glycosylation site" description="N-linked (GlcNAc...) asparagine" evidence="2">
    <location>
        <position position="564"/>
    </location>
</feature>
<feature type="glycosylation site" description="N-linked (GlcNAc...) asparagine" evidence="2">
    <location>
        <position position="565"/>
    </location>
</feature>